<feature type="chain" id="PRO_0000340130" description="Sugar fermentation stimulation protein homolog">
    <location>
        <begin position="1"/>
        <end position="238"/>
    </location>
</feature>
<proteinExistence type="inferred from homology"/>
<name>SFSA_ACTSZ</name>
<organism>
    <name type="scientific">Actinobacillus succinogenes (strain ATCC 55618 / DSM 22257 / CCUG 43843 / 130Z)</name>
    <dbReference type="NCBI Taxonomy" id="339671"/>
    <lineage>
        <taxon>Bacteria</taxon>
        <taxon>Pseudomonadati</taxon>
        <taxon>Pseudomonadota</taxon>
        <taxon>Gammaproteobacteria</taxon>
        <taxon>Pasteurellales</taxon>
        <taxon>Pasteurellaceae</taxon>
        <taxon>Actinobacillus</taxon>
    </lineage>
</organism>
<evidence type="ECO:0000255" key="1">
    <source>
        <dbReference type="HAMAP-Rule" id="MF_00095"/>
    </source>
</evidence>
<accession>A6VN35</accession>
<gene>
    <name evidence="1" type="primary">sfsA</name>
    <name type="ordered locus">Asuc_1016</name>
</gene>
<keyword id="KW-1185">Reference proteome</keyword>
<protein>
    <recommendedName>
        <fullName evidence="1">Sugar fermentation stimulation protein homolog</fullName>
    </recommendedName>
</protein>
<sequence>MQLPLLQPAIFIRRYKRFMADVELPNGEILTIHCANTGAMTGCAEKGDTVWYSDSKSTTRKYPCSWELTQLSNGSLVCINTHRSNQLVHEALQNKVIKELADYSEIYPEVKYGEENSRIDFLLKGEGLPDCYVEVKSITLVKNSIGMFPDAVTTRGQKHVRELLAMKKQGHRAVVLFAGLHNGFDCFKIAEHIDPEYDRLLKDAMRQGVEAYAYAGAFEKTQEIPTALSLTGKVPFIE</sequence>
<reference key="1">
    <citation type="journal article" date="2010" name="BMC Genomics">
        <title>A genomic perspective on the potential of Actinobacillus succinogenes for industrial succinate production.</title>
        <authorList>
            <person name="McKinlay J.B."/>
            <person name="Laivenieks M."/>
            <person name="Schindler B.D."/>
            <person name="McKinlay A.A."/>
            <person name="Siddaramappa S."/>
            <person name="Challacombe J.F."/>
            <person name="Lowry S.R."/>
            <person name="Clum A."/>
            <person name="Lapidus A.L."/>
            <person name="Burkhart K.B."/>
            <person name="Harkins V."/>
            <person name="Vieille C."/>
        </authorList>
    </citation>
    <scope>NUCLEOTIDE SEQUENCE [LARGE SCALE GENOMIC DNA]</scope>
    <source>
        <strain>ATCC 55618 / DSM 22257 / CCUG 43843 / 130Z</strain>
    </source>
</reference>
<comment type="similarity">
    <text evidence="1">Belongs to the SfsA family.</text>
</comment>
<dbReference type="EMBL" id="CP000746">
    <property type="protein sequence ID" value="ABR74382.1"/>
    <property type="molecule type" value="Genomic_DNA"/>
</dbReference>
<dbReference type="RefSeq" id="WP_012072759.1">
    <property type="nucleotide sequence ID" value="NC_009655.1"/>
</dbReference>
<dbReference type="SMR" id="A6VN35"/>
<dbReference type="STRING" id="339671.Asuc_1016"/>
<dbReference type="KEGG" id="asu:Asuc_1016"/>
<dbReference type="eggNOG" id="COG1489">
    <property type="taxonomic scope" value="Bacteria"/>
</dbReference>
<dbReference type="HOGENOM" id="CLU_052299_2_0_6"/>
<dbReference type="OrthoDB" id="9802365at2"/>
<dbReference type="Proteomes" id="UP000001114">
    <property type="component" value="Chromosome"/>
</dbReference>
<dbReference type="GO" id="GO:0003677">
    <property type="term" value="F:DNA binding"/>
    <property type="evidence" value="ECO:0007669"/>
    <property type="project" value="InterPro"/>
</dbReference>
<dbReference type="CDD" id="cd22359">
    <property type="entry name" value="SfsA-like_bacterial"/>
    <property type="match status" value="1"/>
</dbReference>
<dbReference type="FunFam" id="2.40.50.580:FF:000001">
    <property type="entry name" value="Sugar fermentation stimulation protein A"/>
    <property type="match status" value="1"/>
</dbReference>
<dbReference type="FunFam" id="3.40.1350.60:FF:000001">
    <property type="entry name" value="Sugar fermentation stimulation protein A"/>
    <property type="match status" value="1"/>
</dbReference>
<dbReference type="Gene3D" id="2.40.50.580">
    <property type="match status" value="1"/>
</dbReference>
<dbReference type="Gene3D" id="3.40.1350.60">
    <property type="match status" value="1"/>
</dbReference>
<dbReference type="HAMAP" id="MF_00095">
    <property type="entry name" value="SfsA"/>
    <property type="match status" value="1"/>
</dbReference>
<dbReference type="InterPro" id="IPR007110">
    <property type="entry name" value="Ig-like_dom"/>
</dbReference>
<dbReference type="InterPro" id="IPR005224">
    <property type="entry name" value="SfsA"/>
</dbReference>
<dbReference type="InterPro" id="IPR040452">
    <property type="entry name" value="SfsA_C"/>
</dbReference>
<dbReference type="InterPro" id="IPR041465">
    <property type="entry name" value="SfsA_N"/>
</dbReference>
<dbReference type="NCBIfam" id="TIGR00230">
    <property type="entry name" value="sfsA"/>
    <property type="match status" value="1"/>
</dbReference>
<dbReference type="PANTHER" id="PTHR30545">
    <property type="entry name" value="SUGAR FERMENTATION STIMULATION PROTEIN A"/>
    <property type="match status" value="1"/>
</dbReference>
<dbReference type="PANTHER" id="PTHR30545:SF2">
    <property type="entry name" value="SUGAR FERMENTATION STIMULATION PROTEIN A"/>
    <property type="match status" value="1"/>
</dbReference>
<dbReference type="Pfam" id="PF03749">
    <property type="entry name" value="SfsA"/>
    <property type="match status" value="1"/>
</dbReference>
<dbReference type="Pfam" id="PF17746">
    <property type="entry name" value="SfsA_N"/>
    <property type="match status" value="1"/>
</dbReference>